<gene>
    <name evidence="1" type="primary">atpD</name>
    <name type="ordered locus">THA_571</name>
</gene>
<dbReference type="EC" id="7.1.2.2" evidence="1"/>
<dbReference type="EMBL" id="CP001185">
    <property type="protein sequence ID" value="ACJ75058.1"/>
    <property type="molecule type" value="Genomic_DNA"/>
</dbReference>
<dbReference type="RefSeq" id="WP_004100559.1">
    <property type="nucleotide sequence ID" value="NC_011653.1"/>
</dbReference>
<dbReference type="SMR" id="B7IG44"/>
<dbReference type="STRING" id="484019.THA_571"/>
<dbReference type="KEGG" id="taf:THA_571"/>
<dbReference type="eggNOG" id="COG0055">
    <property type="taxonomic scope" value="Bacteria"/>
</dbReference>
<dbReference type="HOGENOM" id="CLU_022398_0_2_0"/>
<dbReference type="OrthoDB" id="9801639at2"/>
<dbReference type="Proteomes" id="UP000002453">
    <property type="component" value="Chromosome"/>
</dbReference>
<dbReference type="GO" id="GO:0005886">
    <property type="term" value="C:plasma membrane"/>
    <property type="evidence" value="ECO:0007669"/>
    <property type="project" value="UniProtKB-SubCell"/>
</dbReference>
<dbReference type="GO" id="GO:0045259">
    <property type="term" value="C:proton-transporting ATP synthase complex"/>
    <property type="evidence" value="ECO:0007669"/>
    <property type="project" value="UniProtKB-KW"/>
</dbReference>
<dbReference type="GO" id="GO:0005524">
    <property type="term" value="F:ATP binding"/>
    <property type="evidence" value="ECO:0007669"/>
    <property type="project" value="UniProtKB-UniRule"/>
</dbReference>
<dbReference type="GO" id="GO:0016887">
    <property type="term" value="F:ATP hydrolysis activity"/>
    <property type="evidence" value="ECO:0007669"/>
    <property type="project" value="InterPro"/>
</dbReference>
<dbReference type="GO" id="GO:0046933">
    <property type="term" value="F:proton-transporting ATP synthase activity, rotational mechanism"/>
    <property type="evidence" value="ECO:0007669"/>
    <property type="project" value="UniProtKB-UniRule"/>
</dbReference>
<dbReference type="CDD" id="cd18110">
    <property type="entry name" value="ATP-synt_F1_beta_C"/>
    <property type="match status" value="1"/>
</dbReference>
<dbReference type="CDD" id="cd18115">
    <property type="entry name" value="ATP-synt_F1_beta_N"/>
    <property type="match status" value="1"/>
</dbReference>
<dbReference type="CDD" id="cd01133">
    <property type="entry name" value="F1-ATPase_beta_CD"/>
    <property type="match status" value="1"/>
</dbReference>
<dbReference type="FunFam" id="1.10.1140.10:FF:000001">
    <property type="entry name" value="ATP synthase subunit beta"/>
    <property type="match status" value="1"/>
</dbReference>
<dbReference type="FunFam" id="2.40.10.170:FF:000005">
    <property type="entry name" value="ATP synthase subunit beta"/>
    <property type="match status" value="1"/>
</dbReference>
<dbReference type="FunFam" id="3.40.50.300:FF:000004">
    <property type="entry name" value="ATP synthase subunit beta"/>
    <property type="match status" value="1"/>
</dbReference>
<dbReference type="Gene3D" id="2.40.10.170">
    <property type="match status" value="1"/>
</dbReference>
<dbReference type="Gene3D" id="1.10.1140.10">
    <property type="entry name" value="Bovine Mitochondrial F1-atpase, Atp Synthase Beta Chain, Chain D, domain 3"/>
    <property type="match status" value="1"/>
</dbReference>
<dbReference type="Gene3D" id="3.40.50.300">
    <property type="entry name" value="P-loop containing nucleotide triphosphate hydrolases"/>
    <property type="match status" value="1"/>
</dbReference>
<dbReference type="HAMAP" id="MF_01347">
    <property type="entry name" value="ATP_synth_beta_bact"/>
    <property type="match status" value="1"/>
</dbReference>
<dbReference type="InterPro" id="IPR003593">
    <property type="entry name" value="AAA+_ATPase"/>
</dbReference>
<dbReference type="InterPro" id="IPR055190">
    <property type="entry name" value="ATP-synt_VA_C"/>
</dbReference>
<dbReference type="InterPro" id="IPR005722">
    <property type="entry name" value="ATP_synth_F1_bsu"/>
</dbReference>
<dbReference type="InterPro" id="IPR020003">
    <property type="entry name" value="ATPase_a/bsu_AS"/>
</dbReference>
<dbReference type="InterPro" id="IPR050053">
    <property type="entry name" value="ATPase_alpha/beta_chains"/>
</dbReference>
<dbReference type="InterPro" id="IPR004100">
    <property type="entry name" value="ATPase_F1/V1/A1_a/bsu_N"/>
</dbReference>
<dbReference type="InterPro" id="IPR036121">
    <property type="entry name" value="ATPase_F1/V1/A1_a/bsu_N_sf"/>
</dbReference>
<dbReference type="InterPro" id="IPR000194">
    <property type="entry name" value="ATPase_F1/V1/A1_a/bsu_nucl-bd"/>
</dbReference>
<dbReference type="InterPro" id="IPR024034">
    <property type="entry name" value="ATPase_F1/V1_b/a_C"/>
</dbReference>
<dbReference type="InterPro" id="IPR027417">
    <property type="entry name" value="P-loop_NTPase"/>
</dbReference>
<dbReference type="NCBIfam" id="TIGR01039">
    <property type="entry name" value="atpD"/>
    <property type="match status" value="1"/>
</dbReference>
<dbReference type="PANTHER" id="PTHR15184">
    <property type="entry name" value="ATP SYNTHASE"/>
    <property type="match status" value="1"/>
</dbReference>
<dbReference type="PANTHER" id="PTHR15184:SF71">
    <property type="entry name" value="ATP SYNTHASE SUBUNIT BETA, MITOCHONDRIAL"/>
    <property type="match status" value="1"/>
</dbReference>
<dbReference type="Pfam" id="PF00006">
    <property type="entry name" value="ATP-synt_ab"/>
    <property type="match status" value="1"/>
</dbReference>
<dbReference type="Pfam" id="PF02874">
    <property type="entry name" value="ATP-synt_ab_N"/>
    <property type="match status" value="1"/>
</dbReference>
<dbReference type="Pfam" id="PF22919">
    <property type="entry name" value="ATP-synt_VA_C"/>
    <property type="match status" value="1"/>
</dbReference>
<dbReference type="SMART" id="SM00382">
    <property type="entry name" value="AAA"/>
    <property type="match status" value="1"/>
</dbReference>
<dbReference type="SUPFAM" id="SSF47917">
    <property type="entry name" value="C-terminal domain of alpha and beta subunits of F1 ATP synthase"/>
    <property type="match status" value="1"/>
</dbReference>
<dbReference type="SUPFAM" id="SSF50615">
    <property type="entry name" value="N-terminal domain of alpha and beta subunits of F1 ATP synthase"/>
    <property type="match status" value="1"/>
</dbReference>
<dbReference type="SUPFAM" id="SSF52540">
    <property type="entry name" value="P-loop containing nucleoside triphosphate hydrolases"/>
    <property type="match status" value="1"/>
</dbReference>
<dbReference type="PROSITE" id="PS00152">
    <property type="entry name" value="ATPASE_ALPHA_BETA"/>
    <property type="match status" value="1"/>
</dbReference>
<evidence type="ECO:0000255" key="1">
    <source>
        <dbReference type="HAMAP-Rule" id="MF_01347"/>
    </source>
</evidence>
<accession>B7IG44</accession>
<sequence length="470" mass="51843">MSKKSKGKILRVIGPVVDVQFEEGDLPDIYDALVVINPQTGKKLVLEVEQLIGDNAVRTVALDTTDGLMRGLEVENTGEPIKVPVGKGALGRMFNVIGEPIDGKEDEIKDVEYWPIHKAPPSITEQSTSVEILETGIKVIDLLAPFPKGGKIGFFGGAGVGKTVLVMELIRNIAIEHHGFSMFAGVGERTREGNELYLDMQEAEVLDNTVLVFGQMNEPPGARFRVALTALTMAEYFRDVEGRDVLLFIDNIFRFVQAGSEVSALLGRMPSAVGYQPTLATDMGELQERITSTKKGSITSVQAIYVPADDITDPAPATTFTHLDATVVLSRRRAALGLYPAVDPLDSTSKMLDPNIIGQEHYEVARGVQEILQRYKDLQDIIAILGMEELSEEDKLIVQRARKIERFLSQPVHVAEKFSNIPGKYVPINETIRGFKEILEGKYDDLPEMAFYMVGTIDEAVEKAKQLQKK</sequence>
<keyword id="KW-0066">ATP synthesis</keyword>
<keyword id="KW-0067">ATP-binding</keyword>
<keyword id="KW-0997">Cell inner membrane</keyword>
<keyword id="KW-1003">Cell membrane</keyword>
<keyword id="KW-0139">CF(1)</keyword>
<keyword id="KW-0375">Hydrogen ion transport</keyword>
<keyword id="KW-0406">Ion transport</keyword>
<keyword id="KW-0472">Membrane</keyword>
<keyword id="KW-0547">Nucleotide-binding</keyword>
<keyword id="KW-1185">Reference proteome</keyword>
<keyword id="KW-1278">Translocase</keyword>
<keyword id="KW-0813">Transport</keyword>
<reference key="1">
    <citation type="journal article" date="2009" name="J. Bacteriol.">
        <title>The genome of Thermosipho africanus TCF52B: lateral genetic connections to the Firmicutes and Archaea.</title>
        <authorList>
            <person name="Nesboe C.L."/>
            <person name="Bapteste E."/>
            <person name="Curtis B."/>
            <person name="Dahle H."/>
            <person name="Lopez P."/>
            <person name="Macleod D."/>
            <person name="Dlutek M."/>
            <person name="Bowman S."/>
            <person name="Zhaxybayeva O."/>
            <person name="Birkeland N.-K."/>
            <person name="Doolittle W.F."/>
        </authorList>
    </citation>
    <scope>NUCLEOTIDE SEQUENCE [LARGE SCALE GENOMIC DNA]</scope>
    <source>
        <strain>TCF52B</strain>
    </source>
</reference>
<organism>
    <name type="scientific">Thermosipho africanus (strain TCF52B)</name>
    <dbReference type="NCBI Taxonomy" id="484019"/>
    <lineage>
        <taxon>Bacteria</taxon>
        <taxon>Thermotogati</taxon>
        <taxon>Thermotogota</taxon>
        <taxon>Thermotogae</taxon>
        <taxon>Thermotogales</taxon>
        <taxon>Fervidobacteriaceae</taxon>
        <taxon>Thermosipho</taxon>
    </lineage>
</organism>
<comment type="function">
    <text evidence="1">Produces ATP from ADP in the presence of a proton gradient across the membrane. The catalytic sites are hosted primarily by the beta subunits.</text>
</comment>
<comment type="catalytic activity">
    <reaction evidence="1">
        <text>ATP + H2O + 4 H(+)(in) = ADP + phosphate + 5 H(+)(out)</text>
        <dbReference type="Rhea" id="RHEA:57720"/>
        <dbReference type="ChEBI" id="CHEBI:15377"/>
        <dbReference type="ChEBI" id="CHEBI:15378"/>
        <dbReference type="ChEBI" id="CHEBI:30616"/>
        <dbReference type="ChEBI" id="CHEBI:43474"/>
        <dbReference type="ChEBI" id="CHEBI:456216"/>
        <dbReference type="EC" id="7.1.2.2"/>
    </reaction>
</comment>
<comment type="subunit">
    <text evidence="1">F-type ATPases have 2 components, CF(1) - the catalytic core - and CF(0) - the membrane proton channel. CF(1) has five subunits: alpha(3), beta(3), gamma(1), delta(1), epsilon(1). CF(0) has three main subunits: a(1), b(2) and c(9-12). The alpha and beta chains form an alternating ring which encloses part of the gamma chain. CF(1) is attached to CF(0) by a central stalk formed by the gamma and epsilon chains, while a peripheral stalk is formed by the delta and b chains.</text>
</comment>
<comment type="subcellular location">
    <subcellularLocation>
        <location evidence="1">Cell inner membrane</location>
        <topology evidence="1">Peripheral membrane protein</topology>
    </subcellularLocation>
</comment>
<comment type="similarity">
    <text evidence="1">Belongs to the ATPase alpha/beta chains family.</text>
</comment>
<proteinExistence type="inferred from homology"/>
<feature type="chain" id="PRO_1000143556" description="ATP synthase subunit beta">
    <location>
        <begin position="1"/>
        <end position="470"/>
    </location>
</feature>
<feature type="binding site" evidence="1">
    <location>
        <begin position="156"/>
        <end position="163"/>
    </location>
    <ligand>
        <name>ATP</name>
        <dbReference type="ChEBI" id="CHEBI:30616"/>
    </ligand>
</feature>
<name>ATPB_THEAB</name>
<protein>
    <recommendedName>
        <fullName evidence="1">ATP synthase subunit beta</fullName>
        <ecNumber evidence="1">7.1.2.2</ecNumber>
    </recommendedName>
    <alternativeName>
        <fullName evidence="1">ATP synthase F1 sector subunit beta</fullName>
    </alternativeName>
    <alternativeName>
        <fullName evidence="1">F-ATPase subunit beta</fullName>
    </alternativeName>
</protein>